<organism>
    <name type="scientific">Xenopus laevis</name>
    <name type="common">African clawed frog</name>
    <dbReference type="NCBI Taxonomy" id="8355"/>
    <lineage>
        <taxon>Eukaryota</taxon>
        <taxon>Metazoa</taxon>
        <taxon>Chordata</taxon>
        <taxon>Craniata</taxon>
        <taxon>Vertebrata</taxon>
        <taxon>Euteleostomi</taxon>
        <taxon>Amphibia</taxon>
        <taxon>Batrachia</taxon>
        <taxon>Anura</taxon>
        <taxon>Pipoidea</taxon>
        <taxon>Pipidae</taxon>
        <taxon>Xenopodinae</taxon>
        <taxon>Xenopus</taxon>
        <taxon>Xenopus</taxon>
    </lineage>
</organism>
<keyword id="KW-0010">Activator</keyword>
<keyword id="KW-0238">DNA-binding</keyword>
<keyword id="KW-0479">Metal-binding</keyword>
<keyword id="KW-0539">Nucleus</keyword>
<keyword id="KW-1185">Reference proteome</keyword>
<keyword id="KW-0677">Repeat</keyword>
<keyword id="KW-0804">Transcription</keyword>
<keyword id="KW-0805">Transcription regulation</keyword>
<keyword id="KW-0862">Zinc</keyword>
<keyword id="KW-0863">Zinc-finger</keyword>
<feature type="chain" id="PRO_0000047123" description="Early growth response protein 2">
    <location>
        <begin position="1"/>
        <end position="421"/>
    </location>
</feature>
<feature type="zinc finger region" description="C2H2-type 1" evidence="1">
    <location>
        <begin position="288"/>
        <end position="312"/>
    </location>
</feature>
<feature type="zinc finger region" description="C2H2-type 2" evidence="1">
    <location>
        <begin position="318"/>
        <end position="340"/>
    </location>
</feature>
<feature type="zinc finger region" description="C2H2-type 3" evidence="1">
    <location>
        <begin position="346"/>
        <end position="368"/>
    </location>
</feature>
<feature type="region of interest" description="Disordered" evidence="2">
    <location>
        <begin position="127"/>
        <end position="152"/>
    </location>
</feature>
<feature type="region of interest" description="Disordered" evidence="2">
    <location>
        <begin position="179"/>
        <end position="200"/>
    </location>
</feature>
<feature type="region of interest" description="Disordered" evidence="2">
    <location>
        <begin position="223"/>
        <end position="288"/>
    </location>
</feature>
<feature type="compositionally biased region" description="Low complexity" evidence="2">
    <location>
        <begin position="127"/>
        <end position="145"/>
    </location>
</feature>
<feature type="compositionally biased region" description="Polar residues" evidence="2">
    <location>
        <begin position="236"/>
        <end position="247"/>
    </location>
</feature>
<reference key="1">
    <citation type="journal article" date="1993" name="Mech. Dev.">
        <title>The structure and expression of the Xenopus Krox-20 gene: conserved and divergent patterns of expression in rhombomeres and neural crest.</title>
        <authorList>
            <person name="Bradley L.C."/>
            <person name="Snape A."/>
            <person name="Bhatt S."/>
            <person name="Wilkinson D.G."/>
        </authorList>
    </citation>
    <scope>NUCLEOTIDE SEQUENCE [MRNA]</scope>
    <source>
        <tissue>Embryo</tissue>
    </source>
</reference>
<protein>
    <recommendedName>
        <fullName>Early growth response protein 2</fullName>
        <shortName>EGR-2</shortName>
    </recommendedName>
    <alternativeName>
        <fullName>Zinc finger protein Krox-20</fullName>
    </alternativeName>
</protein>
<sequence length="421" mass="46380">MAAKAVDKLPVTFGSFVHQIPEGFYPGEDSTLPASVTIFPNVDLGGPLIQMSGVTGDGMISVDMNNDKRSLDFSYSSNYPLAPRTQPIAYMGKISIDHQYSGSGWNTEGIFNLVSAASLLGVPPSSCSSTSSSNASSGSPNLSCSMSHPQSDLEHIYSPPPYSSCNEIYQDPLRFPCGSPTAASLPPPPSYPSPKGASDGGMFPMIPDYSALFPPQCQRDLHSDRKPFPCPRHPSPLSTIRNFTLGGSSEGPRLASAYSPQNLPLRPILRPRKYPNRPSKTPVHERPYPCPAEGCDRRFSRSDELTRHIRIHTGHKPFQCRICMRNFSRSDHLTTHIRTHTGEKPFACDYCGRKFARSDERKRHTKIHLRQKERKNSATAAWRQHVARTSLKPQSGRDRQPCALLGPAAAHWDSIDPNRTG</sequence>
<accession>Q08427</accession>
<name>EGR2_XENLA</name>
<gene>
    <name type="primary">egr2</name>
    <name type="synonym">krox20</name>
</gene>
<dbReference type="EMBL" id="S56884">
    <property type="protein sequence ID" value="AAB25681.1"/>
    <property type="molecule type" value="mRNA"/>
</dbReference>
<dbReference type="PIR" id="A56550">
    <property type="entry name" value="A56550"/>
</dbReference>
<dbReference type="RefSeq" id="NP_001079248.1">
    <property type="nucleotide sequence ID" value="NM_001085779.1"/>
</dbReference>
<dbReference type="GeneID" id="378520"/>
<dbReference type="KEGG" id="xla:378520"/>
<dbReference type="AGR" id="Xenbase:XB-GENE-866474"/>
<dbReference type="CTD" id="378520"/>
<dbReference type="Xenbase" id="XB-GENE-866474">
    <property type="gene designation" value="egr2.L"/>
</dbReference>
<dbReference type="OrthoDB" id="8197458at2759"/>
<dbReference type="Proteomes" id="UP000186698">
    <property type="component" value="Chromosome 7L"/>
</dbReference>
<dbReference type="Bgee" id="378520">
    <property type="expression patterns" value="Expressed in brain and 13 other cell types or tissues"/>
</dbReference>
<dbReference type="GO" id="GO:0005634">
    <property type="term" value="C:nucleus"/>
    <property type="evidence" value="ECO:0007669"/>
    <property type="project" value="UniProtKB-SubCell"/>
</dbReference>
<dbReference type="GO" id="GO:0000981">
    <property type="term" value="F:DNA-binding transcription factor activity, RNA polymerase II-specific"/>
    <property type="evidence" value="ECO:0000318"/>
    <property type="project" value="GO_Central"/>
</dbReference>
<dbReference type="GO" id="GO:0000978">
    <property type="term" value="F:RNA polymerase II cis-regulatory region sequence-specific DNA binding"/>
    <property type="evidence" value="ECO:0000318"/>
    <property type="project" value="GO_Central"/>
</dbReference>
<dbReference type="GO" id="GO:0008270">
    <property type="term" value="F:zinc ion binding"/>
    <property type="evidence" value="ECO:0007669"/>
    <property type="project" value="UniProtKB-KW"/>
</dbReference>
<dbReference type="GO" id="GO:0006357">
    <property type="term" value="P:regulation of transcription by RNA polymerase II"/>
    <property type="evidence" value="ECO:0000318"/>
    <property type="project" value="GO_Central"/>
</dbReference>
<dbReference type="FunFam" id="3.30.160.60:FF:000837">
    <property type="entry name" value="E3 SUMO-protein ligase EGR2 isoform X1"/>
    <property type="match status" value="1"/>
</dbReference>
<dbReference type="FunFam" id="3.30.160.60:FF:000324">
    <property type="entry name" value="Early growth response protein 4"/>
    <property type="match status" value="1"/>
</dbReference>
<dbReference type="FunFam" id="3.30.160.60:FF:000419">
    <property type="entry name" value="Early growth response protein 4"/>
    <property type="match status" value="1"/>
</dbReference>
<dbReference type="Gene3D" id="3.30.160.60">
    <property type="entry name" value="Classic Zinc Finger"/>
    <property type="match status" value="3"/>
</dbReference>
<dbReference type="InterPro" id="IPR021849">
    <property type="entry name" value="EGR_N"/>
</dbReference>
<dbReference type="InterPro" id="IPR036236">
    <property type="entry name" value="Znf_C2H2_sf"/>
</dbReference>
<dbReference type="InterPro" id="IPR013087">
    <property type="entry name" value="Znf_C2H2_type"/>
</dbReference>
<dbReference type="PANTHER" id="PTHR23235:SF54">
    <property type="entry name" value="E3 SUMO-PROTEIN LIGASE EGR2"/>
    <property type="match status" value="1"/>
</dbReference>
<dbReference type="PANTHER" id="PTHR23235">
    <property type="entry name" value="KRUEPPEL-LIKE TRANSCRIPTION FACTOR"/>
    <property type="match status" value="1"/>
</dbReference>
<dbReference type="Pfam" id="PF11928">
    <property type="entry name" value="DUF3446"/>
    <property type="match status" value="1"/>
</dbReference>
<dbReference type="Pfam" id="PF00096">
    <property type="entry name" value="zf-C2H2"/>
    <property type="match status" value="3"/>
</dbReference>
<dbReference type="SMART" id="SM00355">
    <property type="entry name" value="ZnF_C2H2"/>
    <property type="match status" value="3"/>
</dbReference>
<dbReference type="SUPFAM" id="SSF57667">
    <property type="entry name" value="beta-beta-alpha zinc fingers"/>
    <property type="match status" value="2"/>
</dbReference>
<dbReference type="PROSITE" id="PS00028">
    <property type="entry name" value="ZINC_FINGER_C2H2_1"/>
    <property type="match status" value="3"/>
</dbReference>
<dbReference type="PROSITE" id="PS50157">
    <property type="entry name" value="ZINC_FINGER_C2H2_2"/>
    <property type="match status" value="3"/>
</dbReference>
<comment type="function">
    <text>Sequence-specific DNA-binding transcription factor.</text>
</comment>
<comment type="subcellular location">
    <subcellularLocation>
        <location>Nucleus</location>
    </subcellularLocation>
</comment>
<comment type="similarity">
    <text evidence="3">Belongs to the EGR C2H2-type zinc-finger protein family.</text>
</comment>
<evidence type="ECO:0000255" key="1">
    <source>
        <dbReference type="PROSITE-ProRule" id="PRU00042"/>
    </source>
</evidence>
<evidence type="ECO:0000256" key="2">
    <source>
        <dbReference type="SAM" id="MobiDB-lite"/>
    </source>
</evidence>
<evidence type="ECO:0000305" key="3"/>
<proteinExistence type="evidence at transcript level"/>